<organism>
    <name type="scientific">Salmonella newport (strain SL254)</name>
    <dbReference type="NCBI Taxonomy" id="423368"/>
    <lineage>
        <taxon>Bacteria</taxon>
        <taxon>Pseudomonadati</taxon>
        <taxon>Pseudomonadota</taxon>
        <taxon>Gammaproteobacteria</taxon>
        <taxon>Enterobacterales</taxon>
        <taxon>Enterobacteriaceae</taxon>
        <taxon>Salmonella</taxon>
    </lineage>
</organism>
<comment type="subcellular location">
    <subcellularLocation>
        <location evidence="1">Cell membrane</location>
        <topology evidence="1">Multi-pass membrane protein</topology>
    </subcellularLocation>
</comment>
<comment type="similarity">
    <text evidence="1">Belongs to the chloride channel (TC 2.A.49) family.</text>
</comment>
<reference key="1">
    <citation type="journal article" date="2011" name="J. Bacteriol.">
        <title>Comparative genomics of 28 Salmonella enterica isolates: evidence for CRISPR-mediated adaptive sublineage evolution.</title>
        <authorList>
            <person name="Fricke W.F."/>
            <person name="Mammel M.K."/>
            <person name="McDermott P.F."/>
            <person name="Tartera C."/>
            <person name="White D.G."/>
            <person name="Leclerc J.E."/>
            <person name="Ravel J."/>
            <person name="Cebula T.A."/>
        </authorList>
    </citation>
    <scope>NUCLEOTIDE SEQUENCE [LARGE SCALE GENOMIC DNA]</scope>
    <source>
        <strain>SL254</strain>
    </source>
</reference>
<protein>
    <recommendedName>
        <fullName evidence="1">Putative ion-transport protein YfeO</fullName>
    </recommendedName>
</protein>
<keyword id="KW-1003">Cell membrane</keyword>
<keyword id="KW-0407">Ion channel</keyword>
<keyword id="KW-0406">Ion transport</keyword>
<keyword id="KW-0472">Membrane</keyword>
<keyword id="KW-0812">Transmembrane</keyword>
<keyword id="KW-1133">Transmembrane helix</keyword>
<keyword id="KW-0813">Transport</keyword>
<proteinExistence type="inferred from homology"/>
<dbReference type="EMBL" id="CP001113">
    <property type="protein sequence ID" value="ACF61790.1"/>
    <property type="molecule type" value="Genomic_DNA"/>
</dbReference>
<dbReference type="RefSeq" id="WP_000468920.1">
    <property type="nucleotide sequence ID" value="NC_011080.1"/>
</dbReference>
<dbReference type="SMR" id="B4SZS7"/>
<dbReference type="KEGG" id="see:SNSL254_A2596"/>
<dbReference type="HOGENOM" id="CLU_053130_0_0_6"/>
<dbReference type="Proteomes" id="UP000008824">
    <property type="component" value="Chromosome"/>
</dbReference>
<dbReference type="GO" id="GO:0005886">
    <property type="term" value="C:plasma membrane"/>
    <property type="evidence" value="ECO:0007669"/>
    <property type="project" value="UniProtKB-SubCell"/>
</dbReference>
<dbReference type="GO" id="GO:0015108">
    <property type="term" value="F:chloride transmembrane transporter activity"/>
    <property type="evidence" value="ECO:0007669"/>
    <property type="project" value="InterPro"/>
</dbReference>
<dbReference type="GO" id="GO:0005216">
    <property type="term" value="F:monoatomic ion channel activity"/>
    <property type="evidence" value="ECO:0007669"/>
    <property type="project" value="UniProtKB-UniRule"/>
</dbReference>
<dbReference type="CDD" id="cd00400">
    <property type="entry name" value="Voltage_gated_ClC"/>
    <property type="match status" value="1"/>
</dbReference>
<dbReference type="FunFam" id="1.10.3080.10:FF:000007">
    <property type="entry name" value="Putative ion-transport protein YfeO"/>
    <property type="match status" value="1"/>
</dbReference>
<dbReference type="Gene3D" id="1.10.3080.10">
    <property type="entry name" value="Clc chloride channel"/>
    <property type="match status" value="1"/>
</dbReference>
<dbReference type="HAMAP" id="MF_01115">
    <property type="entry name" value="CLC_YfeO"/>
    <property type="match status" value="1"/>
</dbReference>
<dbReference type="InterPro" id="IPR022969">
    <property type="entry name" value="Chloride_channel_YfeO"/>
</dbReference>
<dbReference type="InterPro" id="IPR014743">
    <property type="entry name" value="Cl-channel_core"/>
</dbReference>
<dbReference type="InterPro" id="IPR001807">
    <property type="entry name" value="ClC"/>
</dbReference>
<dbReference type="InterPro" id="IPR050368">
    <property type="entry name" value="ClC-type_chloride_channel"/>
</dbReference>
<dbReference type="NCBIfam" id="NF002971">
    <property type="entry name" value="PRK03655.1"/>
    <property type="match status" value="1"/>
</dbReference>
<dbReference type="PANTHER" id="PTHR43427">
    <property type="entry name" value="CHLORIDE CHANNEL PROTEIN CLC-E"/>
    <property type="match status" value="1"/>
</dbReference>
<dbReference type="PANTHER" id="PTHR43427:SF9">
    <property type="entry name" value="ION-TRANSPORT PROTEIN YFEO-RELATED"/>
    <property type="match status" value="1"/>
</dbReference>
<dbReference type="Pfam" id="PF00654">
    <property type="entry name" value="Voltage_CLC"/>
    <property type="match status" value="1"/>
</dbReference>
<dbReference type="PRINTS" id="PR00762">
    <property type="entry name" value="CLCHANNEL"/>
</dbReference>
<dbReference type="SUPFAM" id="SSF81340">
    <property type="entry name" value="Clc chloride channel"/>
    <property type="match status" value="1"/>
</dbReference>
<name>YFEO_SALNS</name>
<gene>
    <name evidence="1" type="primary">yfeO</name>
    <name type="ordered locus">SNSL254_A2596</name>
</gene>
<sequence length="411" mass="42984">MFHPRARTMLLLSLPALIIGVASSLVLIAAMKVASVFQQFLWQRLPTSIGIAYDSPFWIVGMLTLTGIVVGLIIRYSPGHAGPDPAIEPLISMPVSPSALPGLLLALIIGLAGGVSLGPEHPIMTINIALAAAFGSRLFPRITALDWTILASAGTIGALFGTPVAAALIFSQTLSGSNDIPMWDRLFAPLMAAAAGSLTTSLFFHPHFSLPIAHYTQMRLVDIASGAIVAAIAIAAGMVAVWCLPRLHELLHRLKNPVLILGIGGFILGILGVIGGPLTLFKGLDEMQQMAFSQTLGAGDYFTLAVVKLAALVIAAASGFRGGRIFPAVFIGAALGLMLHAHVEAVPAAITVSCAILGLVLVVTRDGWLSLFMAAVVVPDTNLLPLLCIVMLPAWLLLAGKPLLAANRHEP</sequence>
<evidence type="ECO:0000255" key="1">
    <source>
        <dbReference type="HAMAP-Rule" id="MF_01115"/>
    </source>
</evidence>
<accession>B4SZS7</accession>
<feature type="chain" id="PRO_1000137220" description="Putative ion-transport protein YfeO">
    <location>
        <begin position="1"/>
        <end position="411"/>
    </location>
</feature>
<feature type="transmembrane region" description="Helical" evidence="1">
    <location>
        <begin position="9"/>
        <end position="29"/>
    </location>
</feature>
<feature type="transmembrane region" description="Helical" evidence="1">
    <location>
        <begin position="54"/>
        <end position="74"/>
    </location>
</feature>
<feature type="transmembrane region" description="Helical" evidence="1">
    <location>
        <begin position="99"/>
        <end position="119"/>
    </location>
</feature>
<feature type="transmembrane region" description="Helical" evidence="1">
    <location>
        <begin position="149"/>
        <end position="169"/>
    </location>
</feature>
<feature type="transmembrane region" description="Helical" evidence="1">
    <location>
        <begin position="186"/>
        <end position="206"/>
    </location>
</feature>
<feature type="transmembrane region" description="Helical" evidence="1">
    <location>
        <begin position="223"/>
        <end position="243"/>
    </location>
</feature>
<feature type="transmembrane region" description="Helical" evidence="1">
    <location>
        <begin position="258"/>
        <end position="278"/>
    </location>
</feature>
<feature type="transmembrane region" description="Helical" evidence="1">
    <location>
        <begin position="296"/>
        <end position="316"/>
    </location>
</feature>
<feature type="transmembrane region" description="Helical" evidence="1">
    <location>
        <begin position="322"/>
        <end position="342"/>
    </location>
</feature>
<feature type="transmembrane region" description="Helical" evidence="1">
    <location>
        <begin position="343"/>
        <end position="363"/>
    </location>
</feature>
<feature type="transmembrane region" description="Helical" evidence="1">
    <location>
        <begin position="386"/>
        <end position="406"/>
    </location>
</feature>